<name>FTSK_STRR6</name>
<dbReference type="EMBL" id="AE007317">
    <property type="protein sequence ID" value="AAK99585.1"/>
    <property type="molecule type" value="Genomic_DNA"/>
</dbReference>
<dbReference type="PIR" id="E97969">
    <property type="entry name" value="E97969"/>
</dbReference>
<dbReference type="RefSeq" id="NP_358375.1">
    <property type="nucleotide sequence ID" value="NC_003098.1"/>
</dbReference>
<dbReference type="SMR" id="P64167"/>
<dbReference type="STRING" id="171101.spr0781"/>
<dbReference type="KEGG" id="spr:spr0781"/>
<dbReference type="PATRIC" id="fig|171101.6.peg.865"/>
<dbReference type="eggNOG" id="COG0697">
    <property type="taxonomic scope" value="Bacteria"/>
</dbReference>
<dbReference type="eggNOG" id="COG1674">
    <property type="taxonomic scope" value="Bacteria"/>
</dbReference>
<dbReference type="HOGENOM" id="CLU_001981_9_6_9"/>
<dbReference type="Proteomes" id="UP000000586">
    <property type="component" value="Chromosome"/>
</dbReference>
<dbReference type="GO" id="GO:0005886">
    <property type="term" value="C:plasma membrane"/>
    <property type="evidence" value="ECO:0007669"/>
    <property type="project" value="UniProtKB-SubCell"/>
</dbReference>
<dbReference type="GO" id="GO:0005524">
    <property type="term" value="F:ATP binding"/>
    <property type="evidence" value="ECO:0007669"/>
    <property type="project" value="UniProtKB-KW"/>
</dbReference>
<dbReference type="GO" id="GO:0016887">
    <property type="term" value="F:ATP hydrolysis activity"/>
    <property type="evidence" value="ECO:0007669"/>
    <property type="project" value="InterPro"/>
</dbReference>
<dbReference type="GO" id="GO:0003677">
    <property type="term" value="F:DNA binding"/>
    <property type="evidence" value="ECO:0007669"/>
    <property type="project" value="UniProtKB-KW"/>
</dbReference>
<dbReference type="GO" id="GO:0015616">
    <property type="term" value="F:DNA translocase activity"/>
    <property type="evidence" value="ECO:0000318"/>
    <property type="project" value="GO_Central"/>
</dbReference>
<dbReference type="GO" id="GO:0051301">
    <property type="term" value="P:cell division"/>
    <property type="evidence" value="ECO:0007669"/>
    <property type="project" value="UniProtKB-KW"/>
</dbReference>
<dbReference type="GO" id="GO:0007059">
    <property type="term" value="P:chromosome segregation"/>
    <property type="evidence" value="ECO:0007669"/>
    <property type="project" value="UniProtKB-KW"/>
</dbReference>
<dbReference type="CDD" id="cd01127">
    <property type="entry name" value="TrwB_TraG_TraD_VirD4"/>
    <property type="match status" value="1"/>
</dbReference>
<dbReference type="Gene3D" id="3.30.980.40">
    <property type="match status" value="1"/>
</dbReference>
<dbReference type="Gene3D" id="3.40.50.300">
    <property type="entry name" value="P-loop containing nucleotide triphosphate hydrolases"/>
    <property type="match status" value="1"/>
</dbReference>
<dbReference type="Gene3D" id="1.10.10.10">
    <property type="entry name" value="Winged helix-like DNA-binding domain superfamily/Winged helix DNA-binding domain"/>
    <property type="match status" value="1"/>
</dbReference>
<dbReference type="InterPro" id="IPR003593">
    <property type="entry name" value="AAA+_ATPase"/>
</dbReference>
<dbReference type="InterPro" id="IPR050206">
    <property type="entry name" value="FtsK/SpoIIIE/SftA"/>
</dbReference>
<dbReference type="InterPro" id="IPR041027">
    <property type="entry name" value="FtsK_alpha"/>
</dbReference>
<dbReference type="InterPro" id="IPR002543">
    <property type="entry name" value="FtsK_dom"/>
</dbReference>
<dbReference type="InterPro" id="IPR018541">
    <property type="entry name" value="Ftsk_gamma"/>
</dbReference>
<dbReference type="InterPro" id="IPR027417">
    <property type="entry name" value="P-loop_NTPase"/>
</dbReference>
<dbReference type="InterPro" id="IPR036388">
    <property type="entry name" value="WH-like_DNA-bd_sf"/>
</dbReference>
<dbReference type="InterPro" id="IPR036390">
    <property type="entry name" value="WH_DNA-bd_sf"/>
</dbReference>
<dbReference type="PANTHER" id="PTHR22683:SF41">
    <property type="entry name" value="DNA TRANSLOCASE FTSK"/>
    <property type="match status" value="1"/>
</dbReference>
<dbReference type="PANTHER" id="PTHR22683">
    <property type="entry name" value="SPORULATION PROTEIN RELATED"/>
    <property type="match status" value="1"/>
</dbReference>
<dbReference type="Pfam" id="PF17854">
    <property type="entry name" value="FtsK_alpha"/>
    <property type="match status" value="1"/>
</dbReference>
<dbReference type="Pfam" id="PF09397">
    <property type="entry name" value="FtsK_gamma"/>
    <property type="match status" value="1"/>
</dbReference>
<dbReference type="Pfam" id="PF01580">
    <property type="entry name" value="FtsK_SpoIIIE"/>
    <property type="match status" value="1"/>
</dbReference>
<dbReference type="SMART" id="SM00382">
    <property type="entry name" value="AAA"/>
    <property type="match status" value="1"/>
</dbReference>
<dbReference type="SMART" id="SM00843">
    <property type="entry name" value="Ftsk_gamma"/>
    <property type="match status" value="1"/>
</dbReference>
<dbReference type="SUPFAM" id="SSF52540">
    <property type="entry name" value="P-loop containing nucleoside triphosphate hydrolases"/>
    <property type="match status" value="1"/>
</dbReference>
<dbReference type="SUPFAM" id="SSF46785">
    <property type="entry name" value="Winged helix' DNA-binding domain"/>
    <property type="match status" value="1"/>
</dbReference>
<dbReference type="PROSITE" id="PS50901">
    <property type="entry name" value="FTSK"/>
    <property type="match status" value="1"/>
</dbReference>
<accession>P64167</accession>
<accession>Q8DQ94</accession>
<accession>Q97RE4</accession>
<sequence length="767" mass="84966">MANKNTSTTRRRPSKAELERKEAIQRMLISLGIAILLIFAAFKLGAAGITLYNLIRLLVGSLAYLAIFGLLIYLFFFKWIRKQEGLLSGFFTIFAGLLLIFEAYLVWKYGLDKSVLKGTMAQVVTDLTGFRTTSFAGGGLIGVALYIPTAFLFSNIGTYFIGSILILVGSLLVSPWSVYDIAEFFSRGFAKWWEGHERRKEERFVKQEEKARQKAEKEARLEQEETEKALLDLPPVDMETGEILTEEAVQNLPPIPEEKWVEPEIILPQAELKFPEQEDDSDDEDVQVDFSAKEALEYKLPSLQLFAPDKPKDQSKEKKIVRENIKILEATFASFGIKVTVERAEIGPSVTKYEVKPAVGVRVNRISNLSDDLALALAAKDVRIEAPIPGKSLIGIEVPNSDIATVSFRELWEQSQTKAENFLEIPLGKAVNGTARAFDLSKMPHLLVAGSTGSGKSVAVNGIIASILMKARPDQVKFMMVDPKMVELSVYNDIPHLLIPVVTNPRKASKALQKVVDEMENRYELFAKVGVRNIAGFNAKVEEFNSQSEYKQIPLPFIVVIVDELADLMMVASKEVEDAIIRLGQKARAAGIHMILATQRPSVDVISGLIKANVPSRVAFAVSSGTDSRTILDENGAEKLLGRGDMLFKPIDENHPVRLQGSFISDDDVERIVNFIKTQADADYDESFDPGEVSENEGEFSDGDAGGDPLFEEAKSLVIETQKASASMIQRRLSVGFNRATRLMEELEIAGVIGPAEGTKPRKVLQQ</sequence>
<gene>
    <name type="primary">ftsK</name>
    <name type="ordered locus">spr0781</name>
</gene>
<feature type="chain" id="PRO_0000098307" description="DNA translocase FtsK">
    <location>
        <begin position="1"/>
        <end position="767"/>
    </location>
</feature>
<feature type="transmembrane region" description="Helical" evidence="2">
    <location>
        <begin position="28"/>
        <end position="50"/>
    </location>
</feature>
<feature type="transmembrane region" description="Helical" evidence="2">
    <location>
        <begin position="54"/>
        <end position="76"/>
    </location>
</feature>
<feature type="transmembrane region" description="Helical" evidence="2">
    <location>
        <begin position="85"/>
        <end position="107"/>
    </location>
</feature>
<feature type="transmembrane region" description="Helical" evidence="2">
    <location>
        <begin position="127"/>
        <end position="149"/>
    </location>
</feature>
<feature type="transmembrane region" description="Helical" evidence="2">
    <location>
        <begin position="156"/>
        <end position="178"/>
    </location>
</feature>
<feature type="topological domain" description="Cytoplasmic" evidence="2">
    <location>
        <begin position="179"/>
        <end position="767"/>
    </location>
</feature>
<feature type="domain" description="FtsK" evidence="3">
    <location>
        <begin position="433"/>
        <end position="629"/>
    </location>
</feature>
<feature type="region of interest" description="Disordered" evidence="4">
    <location>
        <begin position="685"/>
        <end position="705"/>
    </location>
</feature>
<feature type="compositionally biased region" description="Acidic residues" evidence="4">
    <location>
        <begin position="685"/>
        <end position="702"/>
    </location>
</feature>
<feature type="binding site" evidence="3">
    <location>
        <begin position="453"/>
        <end position="458"/>
    </location>
    <ligand>
        <name>ATP</name>
        <dbReference type="ChEBI" id="CHEBI:30616"/>
    </ligand>
</feature>
<keyword id="KW-0067">ATP-binding</keyword>
<keyword id="KW-0131">Cell cycle</keyword>
<keyword id="KW-0132">Cell division</keyword>
<keyword id="KW-1003">Cell membrane</keyword>
<keyword id="KW-0159">Chromosome partition</keyword>
<keyword id="KW-0238">DNA-binding</keyword>
<keyword id="KW-0472">Membrane</keyword>
<keyword id="KW-0547">Nucleotide-binding</keyword>
<keyword id="KW-1185">Reference proteome</keyword>
<keyword id="KW-0812">Transmembrane</keyword>
<keyword id="KW-1133">Transmembrane helix</keyword>
<protein>
    <recommendedName>
        <fullName>DNA translocase FtsK</fullName>
    </recommendedName>
</protein>
<evidence type="ECO:0000250" key="1"/>
<evidence type="ECO:0000255" key="2"/>
<evidence type="ECO:0000255" key="3">
    <source>
        <dbReference type="PROSITE-ProRule" id="PRU00289"/>
    </source>
</evidence>
<evidence type="ECO:0000256" key="4">
    <source>
        <dbReference type="SAM" id="MobiDB-lite"/>
    </source>
</evidence>
<evidence type="ECO:0000269" key="5">
    <source>
    </source>
</evidence>
<evidence type="ECO:0000305" key="6"/>
<proteinExistence type="evidence at protein level"/>
<comment type="function">
    <text evidence="1 5">Essential cell division protein that coordinates cell division and chromosome segregation. The N-terminus is involved in assembly of the cell-division machinery. The C-terminus functions as a DNA motor that moves dsDNA in an ATP-dependent manner towards the difSL recombination site, which is located within the replication terminus region (By similarity). Required for activation of the XerS recombinase, allowing activation of chromosome unlinking by recombination.</text>
</comment>
<comment type="subunit">
    <text evidence="1">Homohexamer. Forms a ring that surrounds DNA (By similarity).</text>
</comment>
<comment type="subcellular location">
    <subcellularLocation>
        <location evidence="1">Cell membrane</location>
        <topology evidence="1">Multi-pass membrane protein</topology>
    </subcellularLocation>
    <text evidence="1">Located at the septum.</text>
</comment>
<comment type="domain">
    <text evidence="1">Consists of an N-terminal domain, which is sufficient for the localization to the septal ring and is required for cell division, followed by a linker domain, and a C-terminal domain, which forms the translocation motor involved in chromosome segregation. The C-terminal domain can be further subdivided into alpha, beta and gamma subdomains. The alpha and beta subdomains form the DNA pump, and the gamma subdomain is a regulatory subdomain (By similarity).</text>
</comment>
<comment type="similarity">
    <text evidence="6">Belongs to the FtsK/SpoIIIE/SftA family.</text>
</comment>
<reference key="1">
    <citation type="journal article" date="2001" name="J. Bacteriol.">
        <title>Genome of the bacterium Streptococcus pneumoniae strain R6.</title>
        <authorList>
            <person name="Hoskins J."/>
            <person name="Alborn W.E. Jr."/>
            <person name="Arnold J."/>
            <person name="Blaszczak L.C."/>
            <person name="Burgett S."/>
            <person name="DeHoff B.S."/>
            <person name="Estrem S.T."/>
            <person name="Fritz L."/>
            <person name="Fu D.-J."/>
            <person name="Fuller W."/>
            <person name="Geringer C."/>
            <person name="Gilmour R."/>
            <person name="Glass J.S."/>
            <person name="Khoja H."/>
            <person name="Kraft A.R."/>
            <person name="Lagace R.E."/>
            <person name="LeBlanc D.J."/>
            <person name="Lee L.N."/>
            <person name="Lefkowitz E.J."/>
            <person name="Lu J."/>
            <person name="Matsushima P."/>
            <person name="McAhren S.M."/>
            <person name="McHenney M."/>
            <person name="McLeaster K."/>
            <person name="Mundy C.W."/>
            <person name="Nicas T.I."/>
            <person name="Norris F.H."/>
            <person name="O'Gara M."/>
            <person name="Peery R.B."/>
            <person name="Robertson G.T."/>
            <person name="Rockey P."/>
            <person name="Sun P.-M."/>
            <person name="Winkler M.E."/>
            <person name="Yang Y."/>
            <person name="Young-Bellido M."/>
            <person name="Zhao G."/>
            <person name="Zook C.A."/>
            <person name="Baltz R.H."/>
            <person name="Jaskunas S.R."/>
            <person name="Rosteck P.R. Jr."/>
            <person name="Skatrud P.L."/>
            <person name="Glass J.I."/>
        </authorList>
    </citation>
    <scope>NUCLEOTIDE SEQUENCE [LARGE SCALE GENOMIC DNA]</scope>
    <source>
        <strain>ATCC BAA-255 / R6</strain>
    </source>
</reference>
<reference key="2">
    <citation type="journal article" date="2007" name="PLoS Genet.">
        <title>The unconventional Xer recombination machinery of Streptococci/Lactococci.</title>
        <authorList>
            <person name="Le Bourgeois P."/>
            <person name="Bugarel M."/>
            <person name="Campo N."/>
            <person name="Daveran-Mingot M.-L."/>
            <person name="Labonte J."/>
            <person name="Lanfranchi D."/>
            <person name="Lautier T."/>
            <person name="Pages C."/>
            <person name="Ritzenthaler P."/>
        </authorList>
    </citation>
    <scope>FUNCTION IN XERS-MEDIATED RECOMBINATION</scope>
    <source>
        <strain>ATCC BAA-255 / R6</strain>
    </source>
</reference>
<organism>
    <name type="scientific">Streptococcus pneumoniae (strain ATCC BAA-255 / R6)</name>
    <dbReference type="NCBI Taxonomy" id="171101"/>
    <lineage>
        <taxon>Bacteria</taxon>
        <taxon>Bacillati</taxon>
        <taxon>Bacillota</taxon>
        <taxon>Bacilli</taxon>
        <taxon>Lactobacillales</taxon>
        <taxon>Streptococcaceae</taxon>
        <taxon>Streptococcus</taxon>
    </lineage>
</organism>